<protein>
    <recommendedName>
        <fullName evidence="1">Dihydroorotate dehydrogenase (quinone)</fullName>
        <ecNumber evidence="1">1.3.5.2</ecNumber>
    </recommendedName>
    <alternativeName>
        <fullName evidence="1">DHOdehase</fullName>
        <shortName evidence="1">DHOD</shortName>
        <shortName evidence="1">DHODase</shortName>
    </alternativeName>
    <alternativeName>
        <fullName evidence="1">Dihydroorotate oxidase</fullName>
    </alternativeName>
</protein>
<organism>
    <name type="scientific">Escherichia coli O139:H28 (strain E24377A / ETEC)</name>
    <dbReference type="NCBI Taxonomy" id="331111"/>
    <lineage>
        <taxon>Bacteria</taxon>
        <taxon>Pseudomonadati</taxon>
        <taxon>Pseudomonadota</taxon>
        <taxon>Gammaproteobacteria</taxon>
        <taxon>Enterobacterales</taxon>
        <taxon>Enterobacteriaceae</taxon>
        <taxon>Escherichia</taxon>
    </lineage>
</organism>
<name>PYRD_ECO24</name>
<reference key="1">
    <citation type="journal article" date="2008" name="J. Bacteriol.">
        <title>The pangenome structure of Escherichia coli: comparative genomic analysis of E. coli commensal and pathogenic isolates.</title>
        <authorList>
            <person name="Rasko D.A."/>
            <person name="Rosovitz M.J."/>
            <person name="Myers G.S.A."/>
            <person name="Mongodin E.F."/>
            <person name="Fricke W.F."/>
            <person name="Gajer P."/>
            <person name="Crabtree J."/>
            <person name="Sebaihia M."/>
            <person name="Thomson N.R."/>
            <person name="Chaudhuri R."/>
            <person name="Henderson I.R."/>
            <person name="Sperandio V."/>
            <person name="Ravel J."/>
        </authorList>
    </citation>
    <scope>NUCLEOTIDE SEQUENCE [LARGE SCALE GENOMIC DNA]</scope>
    <source>
        <strain>E24377A / ETEC</strain>
    </source>
</reference>
<accession>A7ZK49</accession>
<sequence>MYYPFVRKALFQLDPERAHEFTFQQLRRITGTPFEALVRQKVPAKPVNCMGLTFKNPLGLAAGLDKDGECIDALGAMGFGSIEIGTVTPRPQPGNDKPRLFRLVDAEGLINRMGFNNLGVDNLVENVKKAHYDGVLGINIGKNKDTPVEQGKDDYLICMEKIYAYAGYIAINISSPNTPGLRTLQYGEALDDLLTAIKNKQNDLQAMHHKYVPIAVKIAPDLSEEELIQVADSLVRHNIDGVIATNTTLDRSLVQGMKNCDQTGGLSGRPLQLKSTEIIRRLSLELNGRLPIIGVGGIDSVIAAREKIAAGASLVQIYSGFIFKGPPLIKEIVTHI</sequence>
<feature type="chain" id="PRO_1000058681" description="Dihydroorotate dehydrogenase (quinone)">
    <location>
        <begin position="1"/>
        <end position="336"/>
    </location>
</feature>
<feature type="active site" description="Nucleophile" evidence="1">
    <location>
        <position position="175"/>
    </location>
</feature>
<feature type="binding site" evidence="1">
    <location>
        <begin position="62"/>
        <end position="66"/>
    </location>
    <ligand>
        <name>FMN</name>
        <dbReference type="ChEBI" id="CHEBI:58210"/>
    </ligand>
</feature>
<feature type="binding site" evidence="1">
    <location>
        <position position="66"/>
    </location>
    <ligand>
        <name>substrate</name>
    </ligand>
</feature>
<feature type="binding site" evidence="1">
    <location>
        <position position="86"/>
    </location>
    <ligand>
        <name>FMN</name>
        <dbReference type="ChEBI" id="CHEBI:58210"/>
    </ligand>
</feature>
<feature type="binding site" evidence="1">
    <location>
        <begin position="111"/>
        <end position="115"/>
    </location>
    <ligand>
        <name>substrate</name>
    </ligand>
</feature>
<feature type="binding site" evidence="1">
    <location>
        <position position="139"/>
    </location>
    <ligand>
        <name>FMN</name>
        <dbReference type="ChEBI" id="CHEBI:58210"/>
    </ligand>
</feature>
<feature type="binding site" evidence="1">
    <location>
        <position position="172"/>
    </location>
    <ligand>
        <name>FMN</name>
        <dbReference type="ChEBI" id="CHEBI:58210"/>
    </ligand>
</feature>
<feature type="binding site" evidence="1">
    <location>
        <position position="172"/>
    </location>
    <ligand>
        <name>substrate</name>
    </ligand>
</feature>
<feature type="binding site" evidence="1">
    <location>
        <position position="177"/>
    </location>
    <ligand>
        <name>substrate</name>
    </ligand>
</feature>
<feature type="binding site" evidence="1">
    <location>
        <position position="217"/>
    </location>
    <ligand>
        <name>FMN</name>
        <dbReference type="ChEBI" id="CHEBI:58210"/>
    </ligand>
</feature>
<feature type="binding site" evidence="1">
    <location>
        <position position="245"/>
    </location>
    <ligand>
        <name>FMN</name>
        <dbReference type="ChEBI" id="CHEBI:58210"/>
    </ligand>
</feature>
<feature type="binding site" evidence="1">
    <location>
        <begin position="246"/>
        <end position="247"/>
    </location>
    <ligand>
        <name>substrate</name>
    </ligand>
</feature>
<feature type="binding site" evidence="1">
    <location>
        <position position="268"/>
    </location>
    <ligand>
        <name>FMN</name>
        <dbReference type="ChEBI" id="CHEBI:58210"/>
    </ligand>
</feature>
<feature type="binding site" evidence="1">
    <location>
        <position position="297"/>
    </location>
    <ligand>
        <name>FMN</name>
        <dbReference type="ChEBI" id="CHEBI:58210"/>
    </ligand>
</feature>
<feature type="binding site" evidence="1">
    <location>
        <begin position="318"/>
        <end position="319"/>
    </location>
    <ligand>
        <name>FMN</name>
        <dbReference type="ChEBI" id="CHEBI:58210"/>
    </ligand>
</feature>
<evidence type="ECO:0000255" key="1">
    <source>
        <dbReference type="HAMAP-Rule" id="MF_00225"/>
    </source>
</evidence>
<proteinExistence type="inferred from homology"/>
<comment type="function">
    <text evidence="1">Catalyzes the conversion of dihydroorotate to orotate with quinone as electron acceptor.</text>
</comment>
<comment type="catalytic activity">
    <reaction evidence="1">
        <text>(S)-dihydroorotate + a quinone = orotate + a quinol</text>
        <dbReference type="Rhea" id="RHEA:30187"/>
        <dbReference type="ChEBI" id="CHEBI:24646"/>
        <dbReference type="ChEBI" id="CHEBI:30839"/>
        <dbReference type="ChEBI" id="CHEBI:30864"/>
        <dbReference type="ChEBI" id="CHEBI:132124"/>
        <dbReference type="EC" id="1.3.5.2"/>
    </reaction>
</comment>
<comment type="cofactor">
    <cofactor evidence="1">
        <name>FMN</name>
        <dbReference type="ChEBI" id="CHEBI:58210"/>
    </cofactor>
    <text evidence="1">Binds 1 FMN per subunit.</text>
</comment>
<comment type="pathway">
    <text evidence="1">Pyrimidine metabolism; UMP biosynthesis via de novo pathway; orotate from (S)-dihydroorotate (quinone route): step 1/1.</text>
</comment>
<comment type="subunit">
    <text evidence="1">Monomer.</text>
</comment>
<comment type="subcellular location">
    <subcellularLocation>
        <location evidence="1">Cell membrane</location>
        <topology evidence="1">Peripheral membrane protein</topology>
    </subcellularLocation>
</comment>
<comment type="similarity">
    <text evidence="1">Belongs to the dihydroorotate dehydrogenase family. Type 2 subfamily.</text>
</comment>
<gene>
    <name evidence="1" type="primary">pyrD</name>
    <name type="ordered locus">EcE24377A_1060</name>
</gene>
<keyword id="KW-1003">Cell membrane</keyword>
<keyword id="KW-0285">Flavoprotein</keyword>
<keyword id="KW-0288">FMN</keyword>
<keyword id="KW-0472">Membrane</keyword>
<keyword id="KW-0560">Oxidoreductase</keyword>
<keyword id="KW-0665">Pyrimidine biosynthesis</keyword>
<keyword id="KW-1185">Reference proteome</keyword>
<dbReference type="EC" id="1.3.5.2" evidence="1"/>
<dbReference type="EMBL" id="CP000800">
    <property type="protein sequence ID" value="ABV19979.1"/>
    <property type="molecule type" value="Genomic_DNA"/>
</dbReference>
<dbReference type="RefSeq" id="WP_001295352.1">
    <property type="nucleotide sequence ID" value="NC_009801.1"/>
</dbReference>
<dbReference type="SMR" id="A7ZK49"/>
<dbReference type="GeneID" id="93776469"/>
<dbReference type="KEGG" id="ecw:EcE24377A_1060"/>
<dbReference type="HOGENOM" id="CLU_013640_2_0_6"/>
<dbReference type="UniPathway" id="UPA00070">
    <property type="reaction ID" value="UER00946"/>
</dbReference>
<dbReference type="Proteomes" id="UP000001122">
    <property type="component" value="Chromosome"/>
</dbReference>
<dbReference type="GO" id="GO:0005737">
    <property type="term" value="C:cytoplasm"/>
    <property type="evidence" value="ECO:0007669"/>
    <property type="project" value="InterPro"/>
</dbReference>
<dbReference type="GO" id="GO:0005886">
    <property type="term" value="C:plasma membrane"/>
    <property type="evidence" value="ECO:0007669"/>
    <property type="project" value="UniProtKB-SubCell"/>
</dbReference>
<dbReference type="GO" id="GO:0106430">
    <property type="term" value="F:dihydroorotate dehydrogenase (quinone) activity"/>
    <property type="evidence" value="ECO:0007669"/>
    <property type="project" value="UniProtKB-EC"/>
</dbReference>
<dbReference type="GO" id="GO:0006207">
    <property type="term" value="P:'de novo' pyrimidine nucleobase biosynthetic process"/>
    <property type="evidence" value="ECO:0007669"/>
    <property type="project" value="InterPro"/>
</dbReference>
<dbReference type="GO" id="GO:0044205">
    <property type="term" value="P:'de novo' UMP biosynthetic process"/>
    <property type="evidence" value="ECO:0007669"/>
    <property type="project" value="UniProtKB-UniRule"/>
</dbReference>
<dbReference type="CDD" id="cd04738">
    <property type="entry name" value="DHOD_2_like"/>
    <property type="match status" value="1"/>
</dbReference>
<dbReference type="FunFam" id="3.20.20.70:FF:000028">
    <property type="entry name" value="Dihydroorotate dehydrogenase (quinone)"/>
    <property type="match status" value="1"/>
</dbReference>
<dbReference type="Gene3D" id="3.20.20.70">
    <property type="entry name" value="Aldolase class I"/>
    <property type="match status" value="1"/>
</dbReference>
<dbReference type="HAMAP" id="MF_00225">
    <property type="entry name" value="DHO_dh_type2"/>
    <property type="match status" value="1"/>
</dbReference>
<dbReference type="InterPro" id="IPR013785">
    <property type="entry name" value="Aldolase_TIM"/>
</dbReference>
<dbReference type="InterPro" id="IPR050074">
    <property type="entry name" value="DHO_dehydrogenase"/>
</dbReference>
<dbReference type="InterPro" id="IPR012135">
    <property type="entry name" value="Dihydroorotate_DH_1_2"/>
</dbReference>
<dbReference type="InterPro" id="IPR005719">
    <property type="entry name" value="Dihydroorotate_DH_2"/>
</dbReference>
<dbReference type="InterPro" id="IPR005720">
    <property type="entry name" value="Dihydroorotate_DH_cat"/>
</dbReference>
<dbReference type="InterPro" id="IPR001295">
    <property type="entry name" value="Dihydroorotate_DH_CS"/>
</dbReference>
<dbReference type="NCBIfam" id="NF003644">
    <property type="entry name" value="PRK05286.1-1"/>
    <property type="match status" value="1"/>
</dbReference>
<dbReference type="NCBIfam" id="NF003645">
    <property type="entry name" value="PRK05286.1-2"/>
    <property type="match status" value="1"/>
</dbReference>
<dbReference type="NCBIfam" id="NF003646">
    <property type="entry name" value="PRK05286.1-4"/>
    <property type="match status" value="1"/>
</dbReference>
<dbReference type="NCBIfam" id="NF003652">
    <property type="entry name" value="PRK05286.2-5"/>
    <property type="match status" value="1"/>
</dbReference>
<dbReference type="NCBIfam" id="TIGR01036">
    <property type="entry name" value="pyrD_sub2"/>
    <property type="match status" value="1"/>
</dbReference>
<dbReference type="PANTHER" id="PTHR48109:SF4">
    <property type="entry name" value="DIHYDROOROTATE DEHYDROGENASE (QUINONE), MITOCHONDRIAL"/>
    <property type="match status" value="1"/>
</dbReference>
<dbReference type="PANTHER" id="PTHR48109">
    <property type="entry name" value="DIHYDROOROTATE DEHYDROGENASE (QUINONE), MITOCHONDRIAL-RELATED"/>
    <property type="match status" value="1"/>
</dbReference>
<dbReference type="Pfam" id="PF01180">
    <property type="entry name" value="DHO_dh"/>
    <property type="match status" value="1"/>
</dbReference>
<dbReference type="PIRSF" id="PIRSF000164">
    <property type="entry name" value="DHO_oxidase"/>
    <property type="match status" value="1"/>
</dbReference>
<dbReference type="SUPFAM" id="SSF51395">
    <property type="entry name" value="FMN-linked oxidoreductases"/>
    <property type="match status" value="1"/>
</dbReference>
<dbReference type="PROSITE" id="PS00911">
    <property type="entry name" value="DHODEHASE_1"/>
    <property type="match status" value="1"/>
</dbReference>
<dbReference type="PROSITE" id="PS00912">
    <property type="entry name" value="DHODEHASE_2"/>
    <property type="match status" value="1"/>
</dbReference>